<keyword id="KW-0125">Carotenoid biosynthesis</keyword>
<keyword id="KW-0460">Magnesium</keyword>
<keyword id="KW-0464">Manganese</keyword>
<keyword id="KW-0479">Metal-binding</keyword>
<keyword id="KW-0614">Plasmid</keyword>
<keyword id="KW-0808">Transferase</keyword>
<evidence type="ECO:0000250" key="1"/>
<evidence type="ECO:0000305" key="2"/>
<evidence type="ECO:0000305" key="3">
    <source>
    </source>
</evidence>
<feature type="chain" id="PRO_0000067439" description="Phytoene synthase">
    <location>
        <begin position="1"/>
        <end position="289"/>
    </location>
</feature>
<organism>
    <name type="scientific">Thermus thermophilus (strain ATCC BAA-163 / DSM 7039 / HB27)</name>
    <dbReference type="NCBI Taxonomy" id="262724"/>
    <lineage>
        <taxon>Bacteria</taxon>
        <taxon>Thermotogati</taxon>
        <taxon>Deinococcota</taxon>
        <taxon>Deinococci</taxon>
        <taxon>Thermales</taxon>
        <taxon>Thermaceae</taxon>
        <taxon>Thermus</taxon>
    </lineage>
</organism>
<geneLocation type="plasmid">
    <name>pTT27</name>
</geneLocation>
<sequence>MKMPASMEPDWKALLRVLRAHSATFYLGSLLFPKEARKGAWAVYAACRLGDEAVDGEGGGPEALEAWWAGVERAYRGRPLAEWEKGLAWALERWDIPFEAFLHMREGFLTDLGPVRLGTEAELLRYCYQVAGTVGRMMAPIAGGGKEAEARAVKLGQAMQLTNILRDVGEDLERDRVYLPLDLLRAHGVEVEDLRAGRVTPGYRALMAHLEGKARALYREGLAGLGHLKVGRAAIALAALQYRGILDKLRLSGYDNLGRRAHLKAWERALLLPKAFLAARFPPRPEGSP</sequence>
<dbReference type="EC" id="2.5.1.-"/>
<dbReference type="EMBL" id="AB001637">
    <property type="status" value="NOT_ANNOTATED_CDS"/>
    <property type="molecule type" value="Genomic_DNA"/>
</dbReference>
<dbReference type="EMBL" id="AE017222">
    <property type="protein sequence ID" value="AAS82387.1"/>
    <property type="molecule type" value="Genomic_DNA"/>
</dbReference>
<dbReference type="SMR" id="P37270"/>
<dbReference type="KEGG" id="tth:TT_P0057"/>
<dbReference type="eggNOG" id="COG1562">
    <property type="taxonomic scope" value="Bacteria"/>
</dbReference>
<dbReference type="HOGENOM" id="CLU_037269_1_3_0"/>
<dbReference type="OrthoDB" id="9787280at2"/>
<dbReference type="UniPathway" id="UPA00799"/>
<dbReference type="Proteomes" id="UP000000592">
    <property type="component" value="Plasmid pTT27"/>
</dbReference>
<dbReference type="GO" id="GO:0046905">
    <property type="term" value="F:15-cis-phytoene synthase activity"/>
    <property type="evidence" value="ECO:0000250"/>
    <property type="project" value="UniProtKB"/>
</dbReference>
<dbReference type="GO" id="GO:0004311">
    <property type="term" value="F:geranylgeranyl diphosphate synthase activity"/>
    <property type="evidence" value="ECO:0007669"/>
    <property type="project" value="InterPro"/>
</dbReference>
<dbReference type="GO" id="GO:0046872">
    <property type="term" value="F:metal ion binding"/>
    <property type="evidence" value="ECO:0007669"/>
    <property type="project" value="UniProtKB-KW"/>
</dbReference>
<dbReference type="GO" id="GO:0051996">
    <property type="term" value="F:squalene synthase [NAD(P)H] activity"/>
    <property type="evidence" value="ECO:0007669"/>
    <property type="project" value="InterPro"/>
</dbReference>
<dbReference type="GO" id="GO:0016117">
    <property type="term" value="P:carotenoid biosynthetic process"/>
    <property type="evidence" value="ECO:0000250"/>
    <property type="project" value="UniProtKB"/>
</dbReference>
<dbReference type="CDD" id="cd00683">
    <property type="entry name" value="Trans_IPPS_HH"/>
    <property type="match status" value="1"/>
</dbReference>
<dbReference type="FunFam" id="1.10.600.10:FF:000020">
    <property type="entry name" value="Phytoene synthase"/>
    <property type="match status" value="1"/>
</dbReference>
<dbReference type="Gene3D" id="1.10.600.10">
    <property type="entry name" value="Farnesyl Diphosphate Synthase"/>
    <property type="match status" value="1"/>
</dbReference>
<dbReference type="InterPro" id="IPR008949">
    <property type="entry name" value="Isoprenoid_synthase_dom_sf"/>
</dbReference>
<dbReference type="InterPro" id="IPR002060">
    <property type="entry name" value="Squ/phyt_synthse"/>
</dbReference>
<dbReference type="InterPro" id="IPR019845">
    <property type="entry name" value="Squalene/phytoene_synthase_CS"/>
</dbReference>
<dbReference type="InterPro" id="IPR044843">
    <property type="entry name" value="Trans_IPPS_bact-type"/>
</dbReference>
<dbReference type="InterPro" id="IPR033904">
    <property type="entry name" value="Trans_IPPS_HH"/>
</dbReference>
<dbReference type="PANTHER" id="PTHR31480">
    <property type="entry name" value="BIFUNCTIONAL LYCOPENE CYCLASE/PHYTOENE SYNTHASE"/>
    <property type="match status" value="1"/>
</dbReference>
<dbReference type="Pfam" id="PF00494">
    <property type="entry name" value="SQS_PSY"/>
    <property type="match status" value="1"/>
</dbReference>
<dbReference type="SFLD" id="SFLDS00005">
    <property type="entry name" value="Isoprenoid_Synthase_Type_I"/>
    <property type="match status" value="1"/>
</dbReference>
<dbReference type="SFLD" id="SFLDG01212">
    <property type="entry name" value="Phytoene_synthase_like"/>
    <property type="match status" value="1"/>
</dbReference>
<dbReference type="SUPFAM" id="SSF48576">
    <property type="entry name" value="Terpenoid synthases"/>
    <property type="match status" value="1"/>
</dbReference>
<dbReference type="PROSITE" id="PS01044">
    <property type="entry name" value="SQUALEN_PHYTOEN_SYN_1"/>
    <property type="match status" value="1"/>
</dbReference>
<dbReference type="PROSITE" id="PS01045">
    <property type="entry name" value="SQUALEN_PHYTOEN_SYN_2"/>
    <property type="match status" value="1"/>
</dbReference>
<protein>
    <recommendedName>
        <fullName>Phytoene synthase</fullName>
        <shortName>PSase</shortName>
        <ecNumber>2.5.1.-</ecNumber>
    </recommendedName>
</protein>
<accession>P37270</accession>
<comment type="function">
    <text evidence="3">Involved in the biosynthesis of carotenoids. Catalyzes the condensation of two molecules of geranylgeranyl diphosphate (GGPP) to give prephytoene diphosphate (PPPP) and the subsequent rearrangement of the cyclopropylcarbinyl intermediate to yield phytoene (Probable).</text>
</comment>
<comment type="cofactor">
    <cofactor evidence="1">
        <name>ATP</name>
        <dbReference type="ChEBI" id="CHEBI:30616"/>
    </cofactor>
    <text evidence="1">ATP is required for the transferase activity but it does not seem to be hydrolyzed during the reaction.</text>
</comment>
<comment type="cofactor">
    <cofactor evidence="1">
        <name>Mn(2+)</name>
        <dbReference type="ChEBI" id="CHEBI:29035"/>
    </cofactor>
    <cofactor evidence="1">
        <name>Mg(2+)</name>
        <dbReference type="ChEBI" id="CHEBI:18420"/>
    </cofactor>
</comment>
<comment type="pathway">
    <text>Carotenoid biosynthesis; phytoene biosynthesis.</text>
</comment>
<comment type="similarity">
    <text evidence="2">Belongs to the phytoene/squalene synthase family.</text>
</comment>
<proteinExistence type="inferred from homology"/>
<reference key="1">
    <citation type="journal article" date="1993" name="Appl. Environ. Microbiol.">
        <title>Molecular cloning and sequence analysis of the crtB gene of Thermus thermophilus HB27, an extreme thermophile producing carotenoid pigments.</title>
        <authorList>
            <person name="Hoshino T."/>
            <person name="Fujii R."/>
            <person name="Nakahara T."/>
        </authorList>
    </citation>
    <scope>NUCLEOTIDE SEQUENCE [GENOMIC DNA]</scope>
    <scope>FUNCTION</scope>
</reference>
<reference key="2">
    <citation type="journal article" date="2004" name="Nat. Biotechnol.">
        <title>The genome sequence of the extreme thermophile Thermus thermophilus.</title>
        <authorList>
            <person name="Henne A."/>
            <person name="Brueggemann H."/>
            <person name="Raasch C."/>
            <person name="Wiezer A."/>
            <person name="Hartsch T."/>
            <person name="Liesegang H."/>
            <person name="Johann A."/>
            <person name="Lienard T."/>
            <person name="Gohl O."/>
            <person name="Martinez-Arias R."/>
            <person name="Jacobi C."/>
            <person name="Starkuviene V."/>
            <person name="Schlenczeck S."/>
            <person name="Dencker S."/>
            <person name="Huber R."/>
            <person name="Klenk H.-P."/>
            <person name="Kramer W."/>
            <person name="Merkl R."/>
            <person name="Gottschalk G."/>
            <person name="Fritz H.-J."/>
        </authorList>
    </citation>
    <scope>NUCLEOTIDE SEQUENCE [LARGE SCALE GENOMIC DNA]</scope>
    <source>
        <strain>ATCC BAA-163 / DSM 7039 / HB27</strain>
        <plasmid>pTT27</plasmid>
    </source>
</reference>
<name>CRTB_THET2</name>
<gene>
    <name type="primary">crtB</name>
    <name type="ordered locus">TT_P0057</name>
</gene>